<protein>
    <recommendedName>
        <fullName>Olfactory receptor 11L1</fullName>
    </recommendedName>
</protein>
<comment type="function">
    <text evidence="5">Odorant receptor.</text>
</comment>
<comment type="subcellular location">
    <subcellularLocation>
        <location>Cell membrane</location>
        <topology>Multi-pass membrane protein</topology>
    </subcellularLocation>
</comment>
<comment type="similarity">
    <text evidence="2">Belongs to the G-protein coupled receptor 1 family.</text>
</comment>
<comment type="online information" name="Human Olfactory Receptor Data Exploratorium (HORDE)">
    <link uri="http://genome.weizmann.ac.il/horde/card/index/symbol:OR11L1"/>
</comment>
<sequence length="322" mass="36763">MEPQNTSTVTNFQLLGFQNLLEWQALLFVIFLLIYCLTIIGNVVIITVVSQGLRLHSPMYMFLQHLSFLEVWYTSTTVPLLLANLLSWGQAISFSACMAQLYFFVFLGATECFLLAFMAYDRYLAICSPLRYPFLMHRGLCARLVVVSWCTGVSTGFLPSLMISRLDFCGRNQINHFFCDLPPLMQLSCSRVYITEVTIFILSIAVLCICFFLTLGPYVFIVSSILRIPSTSGRRKTFSTCGSHLAVVTLYYGTMISMYVCPSPHLLPEINKIISVFYTVVTPLLNPVIYSLRNKDFKEAVRKVMRRKCGILWSTSKRKFLY</sequence>
<name>O11L1_HUMAN</name>
<dbReference type="EMBL" id="AB065646">
    <property type="protein sequence ID" value="BAC05872.1"/>
    <property type="molecule type" value="Genomic_DNA"/>
</dbReference>
<dbReference type="EMBL" id="KP290124">
    <property type="protein sequence ID" value="ALI87315.1"/>
    <property type="molecule type" value="Genomic_DNA"/>
</dbReference>
<dbReference type="EMBL" id="CH471148">
    <property type="protein sequence ID" value="EAW77204.1"/>
    <property type="molecule type" value="Genomic_DNA"/>
</dbReference>
<dbReference type="EMBL" id="BC140753">
    <property type="protein sequence ID" value="AAI40754.1"/>
    <property type="molecule type" value="mRNA"/>
</dbReference>
<dbReference type="CCDS" id="CCDS31098.1"/>
<dbReference type="RefSeq" id="NP_001001959.1">
    <property type="nucleotide sequence ID" value="NM_001001959.1"/>
</dbReference>
<dbReference type="SMR" id="Q8NGX0"/>
<dbReference type="FunCoup" id="Q8NGX0">
    <property type="interactions" value="419"/>
</dbReference>
<dbReference type="STRING" id="9606.ENSP00000348033"/>
<dbReference type="GlyCosmos" id="Q8NGX0">
    <property type="glycosylation" value="1 site, No reported glycans"/>
</dbReference>
<dbReference type="GlyGen" id="Q8NGX0">
    <property type="glycosylation" value="1 site"/>
</dbReference>
<dbReference type="BioMuta" id="OR11L1"/>
<dbReference type="DMDM" id="38372779"/>
<dbReference type="PaxDb" id="9606-ENSP00000348033"/>
<dbReference type="Antibodypedia" id="57422">
    <property type="antibodies" value="101 antibodies from 24 providers"/>
</dbReference>
<dbReference type="DNASU" id="391189"/>
<dbReference type="Ensembl" id="ENST00000355784.3">
    <property type="protein sequence ID" value="ENSP00000348033.2"/>
    <property type="gene ID" value="ENSG00000197591.3"/>
</dbReference>
<dbReference type="GeneID" id="391189"/>
<dbReference type="KEGG" id="hsa:391189"/>
<dbReference type="MANE-Select" id="ENST00000355784.3">
    <property type="protein sequence ID" value="ENSP00000348033.2"/>
    <property type="RefSeq nucleotide sequence ID" value="NM_001001959.1"/>
    <property type="RefSeq protein sequence ID" value="NP_001001959.1"/>
</dbReference>
<dbReference type="UCSC" id="uc001idn.1">
    <property type="organism name" value="human"/>
</dbReference>
<dbReference type="AGR" id="HGNC:14998"/>
<dbReference type="CTD" id="391189"/>
<dbReference type="DisGeNET" id="391189"/>
<dbReference type="GeneCards" id="OR11L1"/>
<dbReference type="HGNC" id="HGNC:14998">
    <property type="gene designation" value="OR11L1"/>
</dbReference>
<dbReference type="HPA" id="ENSG00000197591">
    <property type="expression patterns" value="Not detected"/>
</dbReference>
<dbReference type="neXtProt" id="NX_Q8NGX0"/>
<dbReference type="PharmGKB" id="PA32025"/>
<dbReference type="VEuPathDB" id="HostDB:ENSG00000197591"/>
<dbReference type="eggNOG" id="ENOG502QTTE">
    <property type="taxonomic scope" value="Eukaryota"/>
</dbReference>
<dbReference type="GeneTree" id="ENSGT01090000260045"/>
<dbReference type="HOGENOM" id="CLU_012526_1_2_1"/>
<dbReference type="InParanoid" id="Q8NGX0"/>
<dbReference type="OMA" id="GACECYL"/>
<dbReference type="OrthoDB" id="9444602at2759"/>
<dbReference type="PAN-GO" id="Q8NGX0">
    <property type="GO annotations" value="2 GO annotations based on evolutionary models"/>
</dbReference>
<dbReference type="PhylomeDB" id="Q8NGX0"/>
<dbReference type="TreeFam" id="TF336512"/>
<dbReference type="PathwayCommons" id="Q8NGX0"/>
<dbReference type="Reactome" id="R-HSA-9752946">
    <property type="pathway name" value="Expression and translocation of olfactory receptors"/>
</dbReference>
<dbReference type="BioGRID-ORCS" id="391189">
    <property type="hits" value="12 hits in 756 CRISPR screens"/>
</dbReference>
<dbReference type="GeneWiki" id="OR11L1"/>
<dbReference type="GenomeRNAi" id="391189"/>
<dbReference type="Pharos" id="Q8NGX0">
    <property type="development level" value="Tdark"/>
</dbReference>
<dbReference type="PRO" id="PR:Q8NGX0"/>
<dbReference type="Proteomes" id="UP000005640">
    <property type="component" value="Chromosome 1"/>
</dbReference>
<dbReference type="RNAct" id="Q8NGX0">
    <property type="molecule type" value="protein"/>
</dbReference>
<dbReference type="Bgee" id="ENSG00000197591">
    <property type="expression patterns" value="Expressed in right lobe of thyroid gland and 1 other cell type or tissue"/>
</dbReference>
<dbReference type="GO" id="GO:0070062">
    <property type="term" value="C:extracellular exosome"/>
    <property type="evidence" value="ECO:0007005"/>
    <property type="project" value="UniProtKB"/>
</dbReference>
<dbReference type="GO" id="GO:0005886">
    <property type="term" value="C:plasma membrane"/>
    <property type="evidence" value="ECO:0007669"/>
    <property type="project" value="UniProtKB-SubCell"/>
</dbReference>
<dbReference type="GO" id="GO:0004930">
    <property type="term" value="F:G protein-coupled receptor activity"/>
    <property type="evidence" value="ECO:0007669"/>
    <property type="project" value="UniProtKB-KW"/>
</dbReference>
<dbReference type="GO" id="GO:0005549">
    <property type="term" value="F:odorant binding"/>
    <property type="evidence" value="ECO:0000318"/>
    <property type="project" value="GO_Central"/>
</dbReference>
<dbReference type="GO" id="GO:0004984">
    <property type="term" value="F:olfactory receptor activity"/>
    <property type="evidence" value="ECO:0000318"/>
    <property type="project" value="GO_Central"/>
</dbReference>
<dbReference type="CDD" id="cd13954">
    <property type="entry name" value="7tmA_OR"/>
    <property type="match status" value="1"/>
</dbReference>
<dbReference type="FunFam" id="1.10.1220.70:FF:000001">
    <property type="entry name" value="Olfactory receptor"/>
    <property type="match status" value="1"/>
</dbReference>
<dbReference type="FunFam" id="1.20.1070.10:FF:000001">
    <property type="entry name" value="Olfactory receptor"/>
    <property type="match status" value="1"/>
</dbReference>
<dbReference type="Gene3D" id="1.20.1070.10">
    <property type="entry name" value="Rhodopsin 7-helix transmembrane proteins"/>
    <property type="match status" value="1"/>
</dbReference>
<dbReference type="InterPro" id="IPR000276">
    <property type="entry name" value="GPCR_Rhodpsn"/>
</dbReference>
<dbReference type="InterPro" id="IPR017452">
    <property type="entry name" value="GPCR_Rhodpsn_7TM"/>
</dbReference>
<dbReference type="InterPro" id="IPR000725">
    <property type="entry name" value="Olfact_rcpt"/>
</dbReference>
<dbReference type="InterPro" id="IPR050939">
    <property type="entry name" value="Olfactory_GPCR1"/>
</dbReference>
<dbReference type="PANTHER" id="PTHR24242">
    <property type="entry name" value="G-PROTEIN COUPLED RECEPTOR"/>
    <property type="match status" value="1"/>
</dbReference>
<dbReference type="PANTHER" id="PTHR24242:SF413">
    <property type="entry name" value="OLFACTORY RECEPTOR"/>
    <property type="match status" value="1"/>
</dbReference>
<dbReference type="Pfam" id="PF13853">
    <property type="entry name" value="7tm_4"/>
    <property type="match status" value="1"/>
</dbReference>
<dbReference type="PRINTS" id="PR00237">
    <property type="entry name" value="GPCRRHODOPSN"/>
</dbReference>
<dbReference type="PRINTS" id="PR00245">
    <property type="entry name" value="OLFACTORYR"/>
</dbReference>
<dbReference type="SUPFAM" id="SSF81321">
    <property type="entry name" value="Family A G protein-coupled receptor-like"/>
    <property type="match status" value="1"/>
</dbReference>
<dbReference type="PROSITE" id="PS00237">
    <property type="entry name" value="G_PROTEIN_RECEP_F1_1"/>
    <property type="match status" value="1"/>
</dbReference>
<dbReference type="PROSITE" id="PS50262">
    <property type="entry name" value="G_PROTEIN_RECEP_F1_2"/>
    <property type="match status" value="1"/>
</dbReference>
<gene>
    <name type="primary">OR11L1</name>
</gene>
<organism>
    <name type="scientific">Homo sapiens</name>
    <name type="common">Human</name>
    <dbReference type="NCBI Taxonomy" id="9606"/>
    <lineage>
        <taxon>Eukaryota</taxon>
        <taxon>Metazoa</taxon>
        <taxon>Chordata</taxon>
        <taxon>Craniata</taxon>
        <taxon>Vertebrata</taxon>
        <taxon>Euteleostomi</taxon>
        <taxon>Mammalia</taxon>
        <taxon>Eutheria</taxon>
        <taxon>Euarchontoglires</taxon>
        <taxon>Primates</taxon>
        <taxon>Haplorrhini</taxon>
        <taxon>Catarrhini</taxon>
        <taxon>Hominidae</taxon>
        <taxon>Homo</taxon>
    </lineage>
</organism>
<reference key="1">
    <citation type="submission" date="2001-07" db="EMBL/GenBank/DDBJ databases">
        <title>Genome-wide discovery and analysis of human seven transmembrane helix receptor genes.</title>
        <authorList>
            <person name="Suwa M."/>
            <person name="Sato T."/>
            <person name="Okouchi I."/>
            <person name="Arita M."/>
            <person name="Futami K."/>
            <person name="Matsumoto S."/>
            <person name="Tsutsumi S."/>
            <person name="Aburatani H."/>
            <person name="Asai K."/>
            <person name="Akiyama Y."/>
        </authorList>
    </citation>
    <scope>NUCLEOTIDE SEQUENCE [GENOMIC DNA]</scope>
</reference>
<reference key="2">
    <citation type="journal article" date="2015" name="Sci. Data">
        <title>Human olfactory receptor responses to odorants.</title>
        <authorList>
            <person name="Mainland J.D."/>
            <person name="Li Y.R."/>
            <person name="Zhou T."/>
            <person name="Liu W.L."/>
            <person name="Matsunami H."/>
        </authorList>
    </citation>
    <scope>NUCLEOTIDE SEQUENCE [GENOMIC DNA]</scope>
</reference>
<reference key="3">
    <citation type="submission" date="2005-09" db="EMBL/GenBank/DDBJ databases">
        <authorList>
            <person name="Mural R.J."/>
            <person name="Istrail S."/>
            <person name="Sutton G.G."/>
            <person name="Florea L."/>
            <person name="Halpern A.L."/>
            <person name="Mobarry C.M."/>
            <person name="Lippert R."/>
            <person name="Walenz B."/>
            <person name="Shatkay H."/>
            <person name="Dew I."/>
            <person name="Miller J.R."/>
            <person name="Flanigan M.J."/>
            <person name="Edwards N.J."/>
            <person name="Bolanos R."/>
            <person name="Fasulo D."/>
            <person name="Halldorsson B.V."/>
            <person name="Hannenhalli S."/>
            <person name="Turner R."/>
            <person name="Yooseph S."/>
            <person name="Lu F."/>
            <person name="Nusskern D.R."/>
            <person name="Shue B.C."/>
            <person name="Zheng X.H."/>
            <person name="Zhong F."/>
            <person name="Delcher A.L."/>
            <person name="Huson D.H."/>
            <person name="Kravitz S.A."/>
            <person name="Mouchard L."/>
            <person name="Reinert K."/>
            <person name="Remington K.A."/>
            <person name="Clark A.G."/>
            <person name="Waterman M.S."/>
            <person name="Eichler E.E."/>
            <person name="Adams M.D."/>
            <person name="Hunkapiller M.W."/>
            <person name="Myers E.W."/>
            <person name="Venter J.C."/>
        </authorList>
    </citation>
    <scope>NUCLEOTIDE SEQUENCE [LARGE SCALE GENOMIC DNA]</scope>
</reference>
<reference key="4">
    <citation type="journal article" date="2004" name="Genome Res.">
        <title>The status, quality, and expansion of the NIH full-length cDNA project: the Mammalian Gene Collection (MGC).</title>
        <authorList>
            <consortium name="The MGC Project Team"/>
        </authorList>
    </citation>
    <scope>NUCLEOTIDE SEQUENCE [LARGE SCALE MRNA]</scope>
</reference>
<accession>Q8NGX0</accession>
<accession>B9EIN8</accession>
<proteinExistence type="evidence at transcript level"/>
<feature type="chain" id="PRO_0000150727" description="Olfactory receptor 11L1">
    <location>
        <begin position="1"/>
        <end position="322"/>
    </location>
</feature>
<feature type="topological domain" description="Extracellular" evidence="1">
    <location>
        <begin position="1"/>
        <end position="25"/>
    </location>
</feature>
<feature type="transmembrane region" description="Helical; Name=1" evidence="1">
    <location>
        <begin position="26"/>
        <end position="46"/>
    </location>
</feature>
<feature type="topological domain" description="Cytoplasmic" evidence="1">
    <location>
        <begin position="47"/>
        <end position="54"/>
    </location>
</feature>
<feature type="transmembrane region" description="Helical; Name=2" evidence="1">
    <location>
        <begin position="55"/>
        <end position="75"/>
    </location>
</feature>
<feature type="topological domain" description="Extracellular" evidence="1">
    <location>
        <begin position="76"/>
        <end position="99"/>
    </location>
</feature>
<feature type="transmembrane region" description="Helical; Name=3" evidence="1">
    <location>
        <begin position="100"/>
        <end position="120"/>
    </location>
</feature>
<feature type="topological domain" description="Cytoplasmic" evidence="1">
    <location>
        <begin position="121"/>
        <end position="139"/>
    </location>
</feature>
<feature type="transmembrane region" description="Helical; Name=4" evidence="1">
    <location>
        <begin position="140"/>
        <end position="160"/>
    </location>
</feature>
<feature type="topological domain" description="Extracellular" evidence="1">
    <location>
        <begin position="161"/>
        <end position="197"/>
    </location>
</feature>
<feature type="transmembrane region" description="Helical; Name=5" evidence="1">
    <location>
        <begin position="198"/>
        <end position="217"/>
    </location>
</feature>
<feature type="topological domain" description="Cytoplasmic" evidence="1">
    <location>
        <begin position="218"/>
        <end position="237"/>
    </location>
</feature>
<feature type="transmembrane region" description="Helical; Name=6" evidence="1">
    <location>
        <begin position="238"/>
        <end position="258"/>
    </location>
</feature>
<feature type="topological domain" description="Extracellular" evidence="1">
    <location>
        <begin position="259"/>
        <end position="271"/>
    </location>
</feature>
<feature type="transmembrane region" description="Helical; Name=7" evidence="1">
    <location>
        <begin position="272"/>
        <end position="292"/>
    </location>
</feature>
<feature type="topological domain" description="Cytoplasmic" evidence="1">
    <location>
        <begin position="293"/>
        <end position="322"/>
    </location>
</feature>
<feature type="glycosylation site" description="N-linked (GlcNAc...) asparagine" evidence="1">
    <location>
        <position position="5"/>
    </location>
</feature>
<feature type="disulfide bond" evidence="2">
    <location>
        <begin position="97"/>
        <end position="189"/>
    </location>
</feature>
<feature type="sequence variant" id="VAR_053295" description="In dbSNP:rs10888257." evidence="3 4">
    <original>G</original>
    <variation>S</variation>
    <location>
        <position position="108"/>
    </location>
</feature>
<feature type="sequence variant" id="VAR_034305" description="In dbSNP:rs540891010." evidence="3 4">
    <original>F</original>
    <variation>L</variation>
    <location>
        <position position="117"/>
    </location>
</feature>
<feature type="sequence variant" id="VAR_053296" description="In dbSNP:rs10888256." evidence="3 4">
    <original>A</original>
    <variation>T</variation>
    <location>
        <position position="142"/>
    </location>
</feature>
<feature type="sequence variant" id="VAR_053297" description="In dbSNP:rs10888255.">
    <original>R</original>
    <variation>P</variation>
    <location>
        <position position="171"/>
    </location>
</feature>
<evidence type="ECO:0000255" key="1"/>
<evidence type="ECO:0000255" key="2">
    <source>
        <dbReference type="PROSITE-ProRule" id="PRU00521"/>
    </source>
</evidence>
<evidence type="ECO:0000269" key="3">
    <source>
    </source>
</evidence>
<evidence type="ECO:0000269" key="4">
    <source>
    </source>
</evidence>
<evidence type="ECO:0000305" key="5"/>
<keyword id="KW-1003">Cell membrane</keyword>
<keyword id="KW-1015">Disulfide bond</keyword>
<keyword id="KW-0297">G-protein coupled receptor</keyword>
<keyword id="KW-0325">Glycoprotein</keyword>
<keyword id="KW-0472">Membrane</keyword>
<keyword id="KW-0552">Olfaction</keyword>
<keyword id="KW-0675">Receptor</keyword>
<keyword id="KW-1185">Reference proteome</keyword>
<keyword id="KW-0716">Sensory transduction</keyword>
<keyword id="KW-0807">Transducer</keyword>
<keyword id="KW-0812">Transmembrane</keyword>
<keyword id="KW-1133">Transmembrane helix</keyword>